<protein>
    <recommendedName>
        <fullName evidence="1">Kynureninase</fullName>
        <ecNumber evidence="1">3.7.1.3</ecNumber>
    </recommendedName>
    <alternativeName>
        <fullName evidence="1">L-kynurenine hydrolase</fullName>
    </alternativeName>
</protein>
<name>KYNU_BACHK</name>
<feature type="chain" id="PRO_0000356992" description="Kynureninase">
    <location>
        <begin position="1"/>
        <end position="428"/>
    </location>
</feature>
<feature type="binding site" evidence="1">
    <location>
        <position position="104"/>
    </location>
    <ligand>
        <name>pyridoxal 5'-phosphate</name>
        <dbReference type="ChEBI" id="CHEBI:597326"/>
    </ligand>
</feature>
<feature type="binding site" evidence="1">
    <location>
        <position position="105"/>
    </location>
    <ligand>
        <name>pyridoxal 5'-phosphate</name>
        <dbReference type="ChEBI" id="CHEBI:597326"/>
    </ligand>
</feature>
<feature type="binding site" evidence="1">
    <location>
        <begin position="132"/>
        <end position="135"/>
    </location>
    <ligand>
        <name>pyridoxal 5'-phosphate</name>
        <dbReference type="ChEBI" id="CHEBI:597326"/>
    </ligand>
</feature>
<feature type="binding site" evidence="1">
    <location>
        <position position="213"/>
    </location>
    <ligand>
        <name>pyridoxal 5'-phosphate</name>
        <dbReference type="ChEBI" id="CHEBI:597326"/>
    </ligand>
</feature>
<feature type="binding site" evidence="1">
    <location>
        <position position="216"/>
    </location>
    <ligand>
        <name>pyridoxal 5'-phosphate</name>
        <dbReference type="ChEBI" id="CHEBI:597326"/>
    </ligand>
</feature>
<feature type="binding site" evidence="1">
    <location>
        <position position="238"/>
    </location>
    <ligand>
        <name>pyridoxal 5'-phosphate</name>
        <dbReference type="ChEBI" id="CHEBI:597326"/>
    </ligand>
</feature>
<feature type="binding site" evidence="1">
    <location>
        <position position="267"/>
    </location>
    <ligand>
        <name>pyridoxal 5'-phosphate</name>
        <dbReference type="ChEBI" id="CHEBI:597326"/>
    </ligand>
</feature>
<feature type="binding site" evidence="1">
    <location>
        <position position="295"/>
    </location>
    <ligand>
        <name>pyridoxal 5'-phosphate</name>
        <dbReference type="ChEBI" id="CHEBI:597326"/>
    </ligand>
</feature>
<feature type="modified residue" description="N6-(pyridoxal phosphate)lysine" evidence="1">
    <location>
        <position position="239"/>
    </location>
</feature>
<reference key="1">
    <citation type="journal article" date="2006" name="J. Bacteriol.">
        <title>Pathogenomic sequence analysis of Bacillus cereus and Bacillus thuringiensis isolates closely related to Bacillus anthracis.</title>
        <authorList>
            <person name="Han C.S."/>
            <person name="Xie G."/>
            <person name="Challacombe J.F."/>
            <person name="Altherr M.R."/>
            <person name="Bhotika S.S."/>
            <person name="Bruce D."/>
            <person name="Campbell C.S."/>
            <person name="Campbell M.L."/>
            <person name="Chen J."/>
            <person name="Chertkov O."/>
            <person name="Cleland C."/>
            <person name="Dimitrijevic M."/>
            <person name="Doggett N.A."/>
            <person name="Fawcett J.J."/>
            <person name="Glavina T."/>
            <person name="Goodwin L.A."/>
            <person name="Hill K.K."/>
            <person name="Hitchcock P."/>
            <person name="Jackson P.J."/>
            <person name="Keim P."/>
            <person name="Kewalramani A.R."/>
            <person name="Longmire J."/>
            <person name="Lucas S."/>
            <person name="Malfatti S."/>
            <person name="McMurry K."/>
            <person name="Meincke L.J."/>
            <person name="Misra M."/>
            <person name="Moseman B.L."/>
            <person name="Mundt M."/>
            <person name="Munk A.C."/>
            <person name="Okinaka R.T."/>
            <person name="Parson-Quintana B."/>
            <person name="Reilly L.P."/>
            <person name="Richardson P."/>
            <person name="Robinson D.L."/>
            <person name="Rubin E."/>
            <person name="Saunders E."/>
            <person name="Tapia R."/>
            <person name="Tesmer J.G."/>
            <person name="Thayer N."/>
            <person name="Thompson L.S."/>
            <person name="Tice H."/>
            <person name="Ticknor L.O."/>
            <person name="Wills P.L."/>
            <person name="Brettin T.S."/>
            <person name="Gilna P."/>
        </authorList>
    </citation>
    <scope>NUCLEOTIDE SEQUENCE [LARGE SCALE GENOMIC DNA]</scope>
    <source>
        <strain>97-27</strain>
    </source>
</reference>
<sequence length="428" mass="48659">MYKEPFQPTYEYALECDKHDELKDFQTEFYKKEGTIYLDGNSLGLLSKRAEKSLLTLLDSWKEYGIDGWTEGEHPWFFLSEKLGELTAPLIGALPEESIVTGSTTTNIHQVIATFYEPKGIRTKILADELTFPSDIYALQSQIRLKGLDPDEHLVRVKSRDGRTLSEDDIIQAMTDDIALILLPSVLYRSGQILDMKRLTAEAHERGIHIGFDLCHSIGSIPHHFKEWDVDFAIWCNYKYLNAGPGGVAGLYVNKKHFNRLPGLSGWFSSRKDKQFDMEHTLTAADHAGAYQIGTPHILSTAPLIGSLEIFKDAGIERLREKSLHITRYMLNLIDHELKDFGFAIGNPLEDEKRGGHIYLEHAEAARICKALKANGVIPDFRAPNGVRLAPVALYNTYEEVWQSVMILKKIMKDEEYKQFENKREVVA</sequence>
<keyword id="KW-0378">Hydrolase</keyword>
<keyword id="KW-0662">Pyridine nucleotide biosynthesis</keyword>
<keyword id="KW-0663">Pyridoxal phosphate</keyword>
<proteinExistence type="inferred from homology"/>
<gene>
    <name evidence="1" type="primary">kynU</name>
    <name type="ordered locus">BT9727_2523</name>
</gene>
<accession>Q6HHX7</accession>
<evidence type="ECO:0000255" key="1">
    <source>
        <dbReference type="HAMAP-Rule" id="MF_01970"/>
    </source>
</evidence>
<organism>
    <name type="scientific">Bacillus thuringiensis subsp. konkukian (strain 97-27)</name>
    <dbReference type="NCBI Taxonomy" id="281309"/>
    <lineage>
        <taxon>Bacteria</taxon>
        <taxon>Bacillati</taxon>
        <taxon>Bacillota</taxon>
        <taxon>Bacilli</taxon>
        <taxon>Bacillales</taxon>
        <taxon>Bacillaceae</taxon>
        <taxon>Bacillus</taxon>
        <taxon>Bacillus cereus group</taxon>
    </lineage>
</organism>
<comment type="function">
    <text evidence="1">Catalyzes the cleavage of L-kynurenine (L-Kyn) and L-3-hydroxykynurenine (L-3OHKyn) into anthranilic acid (AA) and 3-hydroxyanthranilic acid (3-OHAA), respectively.</text>
</comment>
<comment type="catalytic activity">
    <reaction evidence="1">
        <text>L-kynurenine + H2O = anthranilate + L-alanine + H(+)</text>
        <dbReference type="Rhea" id="RHEA:16813"/>
        <dbReference type="ChEBI" id="CHEBI:15377"/>
        <dbReference type="ChEBI" id="CHEBI:15378"/>
        <dbReference type="ChEBI" id="CHEBI:16567"/>
        <dbReference type="ChEBI" id="CHEBI:57959"/>
        <dbReference type="ChEBI" id="CHEBI:57972"/>
        <dbReference type="EC" id="3.7.1.3"/>
    </reaction>
</comment>
<comment type="catalytic activity">
    <reaction evidence="1">
        <text>3-hydroxy-L-kynurenine + H2O = 3-hydroxyanthranilate + L-alanine + H(+)</text>
        <dbReference type="Rhea" id="RHEA:25143"/>
        <dbReference type="ChEBI" id="CHEBI:15377"/>
        <dbReference type="ChEBI" id="CHEBI:15378"/>
        <dbReference type="ChEBI" id="CHEBI:36559"/>
        <dbReference type="ChEBI" id="CHEBI:57972"/>
        <dbReference type="ChEBI" id="CHEBI:58125"/>
        <dbReference type="EC" id="3.7.1.3"/>
    </reaction>
</comment>
<comment type="cofactor">
    <cofactor evidence="1">
        <name>pyridoxal 5'-phosphate</name>
        <dbReference type="ChEBI" id="CHEBI:597326"/>
    </cofactor>
</comment>
<comment type="pathway">
    <text evidence="1">Amino-acid degradation; L-kynurenine degradation; L-alanine and anthranilate from L-kynurenine: step 1/1.</text>
</comment>
<comment type="pathway">
    <text evidence="1">Cofactor biosynthesis; NAD(+) biosynthesis; quinolinate from L-kynurenine: step 2/3.</text>
</comment>
<comment type="subunit">
    <text evidence="1">Homodimer.</text>
</comment>
<comment type="similarity">
    <text evidence="1">Belongs to the kynureninase family.</text>
</comment>
<dbReference type="EC" id="3.7.1.3" evidence="1"/>
<dbReference type="EMBL" id="AE017355">
    <property type="protein sequence ID" value="AAT60051.1"/>
    <property type="molecule type" value="Genomic_DNA"/>
</dbReference>
<dbReference type="RefSeq" id="WP_000276276.1">
    <property type="nucleotide sequence ID" value="NC_005957.1"/>
</dbReference>
<dbReference type="RefSeq" id="YP_036849.1">
    <property type="nucleotide sequence ID" value="NC_005957.1"/>
</dbReference>
<dbReference type="SMR" id="Q6HHX7"/>
<dbReference type="KEGG" id="btk:BT9727_2523"/>
<dbReference type="PATRIC" id="fig|281309.8.peg.2671"/>
<dbReference type="HOGENOM" id="CLU_003433_4_0_9"/>
<dbReference type="UniPathway" id="UPA00253">
    <property type="reaction ID" value="UER00329"/>
</dbReference>
<dbReference type="UniPathway" id="UPA00334">
    <property type="reaction ID" value="UER00455"/>
</dbReference>
<dbReference type="Proteomes" id="UP000001301">
    <property type="component" value="Chromosome"/>
</dbReference>
<dbReference type="GO" id="GO:0005737">
    <property type="term" value="C:cytoplasm"/>
    <property type="evidence" value="ECO:0007669"/>
    <property type="project" value="InterPro"/>
</dbReference>
<dbReference type="GO" id="GO:0030429">
    <property type="term" value="F:kynureninase activity"/>
    <property type="evidence" value="ECO:0007669"/>
    <property type="project" value="UniProtKB-UniRule"/>
</dbReference>
<dbReference type="GO" id="GO:0030170">
    <property type="term" value="F:pyridoxal phosphate binding"/>
    <property type="evidence" value="ECO:0007669"/>
    <property type="project" value="UniProtKB-UniRule"/>
</dbReference>
<dbReference type="GO" id="GO:0043420">
    <property type="term" value="P:anthranilate metabolic process"/>
    <property type="evidence" value="ECO:0007669"/>
    <property type="project" value="TreeGrafter"/>
</dbReference>
<dbReference type="GO" id="GO:0097053">
    <property type="term" value="P:L-kynurenine catabolic process"/>
    <property type="evidence" value="ECO:0007669"/>
    <property type="project" value="UniProtKB-UniRule"/>
</dbReference>
<dbReference type="GO" id="GO:0019441">
    <property type="term" value="P:L-tryptophan catabolic process to kynurenine"/>
    <property type="evidence" value="ECO:0007669"/>
    <property type="project" value="TreeGrafter"/>
</dbReference>
<dbReference type="GO" id="GO:0009435">
    <property type="term" value="P:NAD biosynthetic process"/>
    <property type="evidence" value="ECO:0007669"/>
    <property type="project" value="UniProtKB-UniPathway"/>
</dbReference>
<dbReference type="GO" id="GO:0019805">
    <property type="term" value="P:quinolinate biosynthetic process"/>
    <property type="evidence" value="ECO:0007669"/>
    <property type="project" value="UniProtKB-UniRule"/>
</dbReference>
<dbReference type="Gene3D" id="3.90.1150.10">
    <property type="entry name" value="Aspartate Aminotransferase, domain 1"/>
    <property type="match status" value="1"/>
</dbReference>
<dbReference type="Gene3D" id="3.40.640.10">
    <property type="entry name" value="Type I PLP-dependent aspartate aminotransferase-like (Major domain)"/>
    <property type="match status" value="1"/>
</dbReference>
<dbReference type="HAMAP" id="MF_01970">
    <property type="entry name" value="Kynureninase"/>
    <property type="match status" value="1"/>
</dbReference>
<dbReference type="InterPro" id="IPR010111">
    <property type="entry name" value="Kynureninase"/>
</dbReference>
<dbReference type="InterPro" id="IPR015424">
    <property type="entry name" value="PyrdxlP-dep_Trfase"/>
</dbReference>
<dbReference type="InterPro" id="IPR015421">
    <property type="entry name" value="PyrdxlP-dep_Trfase_major"/>
</dbReference>
<dbReference type="InterPro" id="IPR015422">
    <property type="entry name" value="PyrdxlP-dep_Trfase_small"/>
</dbReference>
<dbReference type="NCBIfam" id="TIGR01814">
    <property type="entry name" value="kynureninase"/>
    <property type="match status" value="1"/>
</dbReference>
<dbReference type="PANTHER" id="PTHR14084">
    <property type="entry name" value="KYNURENINASE"/>
    <property type="match status" value="1"/>
</dbReference>
<dbReference type="PANTHER" id="PTHR14084:SF0">
    <property type="entry name" value="KYNURENINASE"/>
    <property type="match status" value="1"/>
</dbReference>
<dbReference type="Pfam" id="PF22580">
    <property type="entry name" value="KYNU_C"/>
    <property type="match status" value="1"/>
</dbReference>
<dbReference type="PIRSF" id="PIRSF038800">
    <property type="entry name" value="KYNU"/>
    <property type="match status" value="1"/>
</dbReference>
<dbReference type="SUPFAM" id="SSF53383">
    <property type="entry name" value="PLP-dependent transferases"/>
    <property type="match status" value="1"/>
</dbReference>